<reference key="1">
    <citation type="journal article" date="2006" name="Proc. Natl. Acad. Sci. U.S.A.">
        <title>Molecular genetic anatomy of inter- and intraserotype variation in the human bacterial pathogen group A Streptococcus.</title>
        <authorList>
            <person name="Beres S.B."/>
            <person name="Richter E.W."/>
            <person name="Nagiec M.J."/>
            <person name="Sumby P."/>
            <person name="Porcella S.F."/>
            <person name="DeLeo F.R."/>
            <person name="Musser J.M."/>
        </authorList>
    </citation>
    <scope>NUCLEOTIDE SEQUENCE [LARGE SCALE GENOMIC DNA]</scope>
    <source>
        <strain>MGAS9429</strain>
    </source>
</reference>
<protein>
    <recommendedName>
        <fullName evidence="1">Orotate phosphoribosyltransferase</fullName>
        <shortName evidence="1">OPRT</shortName>
        <shortName evidence="1">OPRTase</shortName>
        <ecNumber evidence="1">2.4.2.10</ecNumber>
    </recommendedName>
</protein>
<keyword id="KW-0328">Glycosyltransferase</keyword>
<keyword id="KW-0460">Magnesium</keyword>
<keyword id="KW-0665">Pyrimidine biosynthesis</keyword>
<keyword id="KW-0808">Transferase</keyword>
<proteinExistence type="inferred from homology"/>
<gene>
    <name evidence="1" type="primary">pyrE</name>
    <name type="ordered locus">MGAS9429_Spy0760</name>
</gene>
<name>PYRE_STRPC</name>
<organism>
    <name type="scientific">Streptococcus pyogenes serotype M12 (strain MGAS9429)</name>
    <dbReference type="NCBI Taxonomy" id="370551"/>
    <lineage>
        <taxon>Bacteria</taxon>
        <taxon>Bacillati</taxon>
        <taxon>Bacillota</taxon>
        <taxon>Bacilli</taxon>
        <taxon>Lactobacillales</taxon>
        <taxon>Streptococcaceae</taxon>
        <taxon>Streptococcus</taxon>
    </lineage>
</organism>
<accession>Q1JM64</accession>
<sequence length="209" mass="22799">MTLASQIATQLLDIKAVYLKPEDPFTWASGIKSPIYTDNRVTLSYPKTRDLIENGFVETIRAHFPEVEVIAGTATAGIPHGAIIADKMTLPFVYIRSKPKDHGAGNQIEGRVLKGQKMVIIEDLISTGGSVLDAAAAASREGADVLGVVAIFTYELPKASQNFKEAGIKLITLSNYTELIAVAKLQGYITNDGLHLLKKFKEDQVNWQQ</sequence>
<evidence type="ECO:0000255" key="1">
    <source>
        <dbReference type="HAMAP-Rule" id="MF_01208"/>
    </source>
</evidence>
<feature type="chain" id="PRO_1000066308" description="Orotate phosphoribosyltransferase">
    <location>
        <begin position="1"/>
        <end position="209"/>
    </location>
</feature>
<feature type="binding site" evidence="1">
    <location>
        <position position="96"/>
    </location>
    <ligand>
        <name>5-phospho-alpha-D-ribose 1-diphosphate</name>
        <dbReference type="ChEBI" id="CHEBI:58017"/>
        <note>ligand shared between dimeric partners</note>
    </ligand>
</feature>
<feature type="binding site" evidence="1">
    <location>
        <position position="100"/>
    </location>
    <ligand>
        <name>5-phospho-alpha-D-ribose 1-diphosphate</name>
        <dbReference type="ChEBI" id="CHEBI:58017"/>
        <note>ligand shared between dimeric partners</note>
    </ligand>
</feature>
<feature type="binding site" evidence="1">
    <location>
        <position position="102"/>
    </location>
    <ligand>
        <name>5-phospho-alpha-D-ribose 1-diphosphate</name>
        <dbReference type="ChEBI" id="CHEBI:58017"/>
        <note>ligand shared between dimeric partners</note>
    </ligand>
</feature>
<feature type="binding site" description="in other chain" evidence="1">
    <location>
        <begin position="122"/>
        <end position="130"/>
    </location>
    <ligand>
        <name>5-phospho-alpha-D-ribose 1-diphosphate</name>
        <dbReference type="ChEBI" id="CHEBI:58017"/>
        <note>ligand shared between dimeric partners</note>
    </ligand>
</feature>
<feature type="binding site" evidence="1">
    <location>
        <position position="126"/>
    </location>
    <ligand>
        <name>orotate</name>
        <dbReference type="ChEBI" id="CHEBI:30839"/>
    </ligand>
</feature>
<dbReference type="EC" id="2.4.2.10" evidence="1"/>
<dbReference type="EMBL" id="CP000259">
    <property type="protein sequence ID" value="ABF31948.1"/>
    <property type="molecule type" value="Genomic_DNA"/>
</dbReference>
<dbReference type="RefSeq" id="WP_002990137.1">
    <property type="nucleotide sequence ID" value="NC_008021.1"/>
</dbReference>
<dbReference type="SMR" id="Q1JM64"/>
<dbReference type="KEGG" id="spk:MGAS9429_Spy0760"/>
<dbReference type="HOGENOM" id="CLU_074878_1_1_9"/>
<dbReference type="UniPathway" id="UPA00070">
    <property type="reaction ID" value="UER00119"/>
</dbReference>
<dbReference type="Proteomes" id="UP000002433">
    <property type="component" value="Chromosome"/>
</dbReference>
<dbReference type="GO" id="GO:0000287">
    <property type="term" value="F:magnesium ion binding"/>
    <property type="evidence" value="ECO:0007669"/>
    <property type="project" value="UniProtKB-UniRule"/>
</dbReference>
<dbReference type="GO" id="GO:0004588">
    <property type="term" value="F:orotate phosphoribosyltransferase activity"/>
    <property type="evidence" value="ECO:0007669"/>
    <property type="project" value="UniProtKB-UniRule"/>
</dbReference>
<dbReference type="GO" id="GO:0044205">
    <property type="term" value="P:'de novo' UMP biosynthetic process"/>
    <property type="evidence" value="ECO:0007669"/>
    <property type="project" value="UniProtKB-UniRule"/>
</dbReference>
<dbReference type="GO" id="GO:0019856">
    <property type="term" value="P:pyrimidine nucleobase biosynthetic process"/>
    <property type="evidence" value="ECO:0007669"/>
    <property type="project" value="TreeGrafter"/>
</dbReference>
<dbReference type="CDD" id="cd06223">
    <property type="entry name" value="PRTases_typeI"/>
    <property type="match status" value="1"/>
</dbReference>
<dbReference type="Gene3D" id="3.40.50.2020">
    <property type="match status" value="1"/>
</dbReference>
<dbReference type="HAMAP" id="MF_01208">
    <property type="entry name" value="PyrE"/>
    <property type="match status" value="1"/>
</dbReference>
<dbReference type="InterPro" id="IPR023031">
    <property type="entry name" value="OPRT"/>
</dbReference>
<dbReference type="InterPro" id="IPR004467">
    <property type="entry name" value="Or_phspho_trans_dom"/>
</dbReference>
<dbReference type="InterPro" id="IPR000836">
    <property type="entry name" value="PRibTrfase_dom"/>
</dbReference>
<dbReference type="InterPro" id="IPR029057">
    <property type="entry name" value="PRTase-like"/>
</dbReference>
<dbReference type="NCBIfam" id="TIGR00336">
    <property type="entry name" value="pyrE"/>
    <property type="match status" value="1"/>
</dbReference>
<dbReference type="PANTHER" id="PTHR19278">
    <property type="entry name" value="OROTATE PHOSPHORIBOSYLTRANSFERASE"/>
    <property type="match status" value="1"/>
</dbReference>
<dbReference type="PANTHER" id="PTHR19278:SF9">
    <property type="entry name" value="URIDINE 5'-MONOPHOSPHATE SYNTHASE"/>
    <property type="match status" value="1"/>
</dbReference>
<dbReference type="Pfam" id="PF00156">
    <property type="entry name" value="Pribosyltran"/>
    <property type="match status" value="1"/>
</dbReference>
<dbReference type="SUPFAM" id="SSF53271">
    <property type="entry name" value="PRTase-like"/>
    <property type="match status" value="1"/>
</dbReference>
<dbReference type="PROSITE" id="PS00103">
    <property type="entry name" value="PUR_PYR_PR_TRANSFER"/>
    <property type="match status" value="1"/>
</dbReference>
<comment type="function">
    <text evidence="1">Catalyzes the transfer of a ribosyl phosphate group from 5-phosphoribose 1-diphosphate to orotate, leading to the formation of orotidine monophosphate (OMP).</text>
</comment>
<comment type="catalytic activity">
    <reaction evidence="1">
        <text>orotidine 5'-phosphate + diphosphate = orotate + 5-phospho-alpha-D-ribose 1-diphosphate</text>
        <dbReference type="Rhea" id="RHEA:10380"/>
        <dbReference type="ChEBI" id="CHEBI:30839"/>
        <dbReference type="ChEBI" id="CHEBI:33019"/>
        <dbReference type="ChEBI" id="CHEBI:57538"/>
        <dbReference type="ChEBI" id="CHEBI:58017"/>
        <dbReference type="EC" id="2.4.2.10"/>
    </reaction>
</comment>
<comment type="cofactor">
    <cofactor evidence="1">
        <name>Mg(2+)</name>
        <dbReference type="ChEBI" id="CHEBI:18420"/>
    </cofactor>
</comment>
<comment type="pathway">
    <text evidence="1">Pyrimidine metabolism; UMP biosynthesis via de novo pathway; UMP from orotate: step 1/2.</text>
</comment>
<comment type="subunit">
    <text evidence="1">Homodimer.</text>
</comment>
<comment type="similarity">
    <text evidence="1">Belongs to the purine/pyrimidine phosphoribosyltransferase family. PyrE subfamily.</text>
</comment>